<accession>Q88B94</accession>
<protein>
    <recommendedName>
        <fullName evidence="1">Argininosuccinate lyase</fullName>
        <shortName evidence="1">ASAL</shortName>
        <ecNumber evidence="1">4.3.2.1</ecNumber>
    </recommendedName>
    <alternativeName>
        <fullName evidence="1">Arginosuccinase</fullName>
    </alternativeName>
</protein>
<keyword id="KW-0028">Amino-acid biosynthesis</keyword>
<keyword id="KW-0055">Arginine biosynthesis</keyword>
<keyword id="KW-0963">Cytoplasm</keyword>
<keyword id="KW-0456">Lyase</keyword>
<keyword id="KW-1185">Reference proteome</keyword>
<feature type="chain" id="PRO_0000137808" description="Argininosuccinate lyase">
    <location>
        <begin position="1"/>
        <end position="464"/>
    </location>
</feature>
<gene>
    <name evidence="1" type="primary">argH</name>
    <name type="ordered locus">PSPTO_0125</name>
</gene>
<organism>
    <name type="scientific">Pseudomonas syringae pv. tomato (strain ATCC BAA-871 / DC3000)</name>
    <dbReference type="NCBI Taxonomy" id="223283"/>
    <lineage>
        <taxon>Bacteria</taxon>
        <taxon>Pseudomonadati</taxon>
        <taxon>Pseudomonadota</taxon>
        <taxon>Gammaproteobacteria</taxon>
        <taxon>Pseudomonadales</taxon>
        <taxon>Pseudomonadaceae</taxon>
        <taxon>Pseudomonas</taxon>
    </lineage>
</organism>
<comment type="catalytic activity">
    <reaction evidence="1">
        <text>2-(N(omega)-L-arginino)succinate = fumarate + L-arginine</text>
        <dbReference type="Rhea" id="RHEA:24020"/>
        <dbReference type="ChEBI" id="CHEBI:29806"/>
        <dbReference type="ChEBI" id="CHEBI:32682"/>
        <dbReference type="ChEBI" id="CHEBI:57472"/>
        <dbReference type="EC" id="4.3.2.1"/>
    </reaction>
</comment>
<comment type="pathway">
    <text evidence="1">Amino-acid biosynthesis; L-arginine biosynthesis; L-arginine from L-ornithine and carbamoyl phosphate: step 3/3.</text>
</comment>
<comment type="subcellular location">
    <subcellularLocation>
        <location evidence="1">Cytoplasm</location>
    </subcellularLocation>
</comment>
<comment type="similarity">
    <text evidence="1">Belongs to the lyase 1 family. Argininosuccinate lyase subfamily.</text>
</comment>
<proteinExistence type="inferred from homology"/>
<name>ARLY_PSESM</name>
<reference key="1">
    <citation type="journal article" date="2003" name="Proc. Natl. Acad. Sci. U.S.A.">
        <title>The complete genome sequence of the Arabidopsis and tomato pathogen Pseudomonas syringae pv. tomato DC3000.</title>
        <authorList>
            <person name="Buell C.R."/>
            <person name="Joardar V."/>
            <person name="Lindeberg M."/>
            <person name="Selengut J."/>
            <person name="Paulsen I.T."/>
            <person name="Gwinn M.L."/>
            <person name="Dodson R.J."/>
            <person name="DeBoy R.T."/>
            <person name="Durkin A.S."/>
            <person name="Kolonay J.F."/>
            <person name="Madupu R."/>
            <person name="Daugherty S.C."/>
            <person name="Brinkac L.M."/>
            <person name="Beanan M.J."/>
            <person name="Haft D.H."/>
            <person name="Nelson W.C."/>
            <person name="Davidsen T.M."/>
            <person name="Zafar N."/>
            <person name="Zhou L."/>
            <person name="Liu J."/>
            <person name="Yuan Q."/>
            <person name="Khouri H.M."/>
            <person name="Fedorova N.B."/>
            <person name="Tran B."/>
            <person name="Russell D."/>
            <person name="Berry K.J."/>
            <person name="Utterback T.R."/>
            <person name="Van Aken S.E."/>
            <person name="Feldblyum T.V."/>
            <person name="D'Ascenzo M."/>
            <person name="Deng W.-L."/>
            <person name="Ramos A.R."/>
            <person name="Alfano J.R."/>
            <person name="Cartinhour S."/>
            <person name="Chatterjee A.K."/>
            <person name="Delaney T.P."/>
            <person name="Lazarowitz S.G."/>
            <person name="Martin G.B."/>
            <person name="Schneider D.J."/>
            <person name="Tang X."/>
            <person name="Bender C.L."/>
            <person name="White O."/>
            <person name="Fraser C.M."/>
            <person name="Collmer A."/>
        </authorList>
    </citation>
    <scope>NUCLEOTIDE SEQUENCE [LARGE SCALE GENOMIC DNA]</scope>
    <source>
        <strain>ATCC BAA-871 / DC3000</strain>
    </source>
</reference>
<dbReference type="EC" id="4.3.2.1" evidence="1"/>
<dbReference type="EMBL" id="AE016853">
    <property type="protein sequence ID" value="AAO53679.1"/>
    <property type="molecule type" value="Genomic_DNA"/>
</dbReference>
<dbReference type="RefSeq" id="NP_789984.1">
    <property type="nucleotide sequence ID" value="NC_004578.1"/>
</dbReference>
<dbReference type="RefSeq" id="WP_011103000.1">
    <property type="nucleotide sequence ID" value="NC_004578.1"/>
</dbReference>
<dbReference type="SMR" id="Q88B94"/>
<dbReference type="STRING" id="223283.PSPTO_0125"/>
<dbReference type="GeneID" id="1181733"/>
<dbReference type="KEGG" id="pst:PSPTO_0125"/>
<dbReference type="PATRIC" id="fig|223283.9.peg.131"/>
<dbReference type="eggNOG" id="COG0165">
    <property type="taxonomic scope" value="Bacteria"/>
</dbReference>
<dbReference type="HOGENOM" id="CLU_027272_2_3_6"/>
<dbReference type="OrthoDB" id="9769623at2"/>
<dbReference type="PhylomeDB" id="Q88B94"/>
<dbReference type="UniPathway" id="UPA00068">
    <property type="reaction ID" value="UER00114"/>
</dbReference>
<dbReference type="Proteomes" id="UP000002515">
    <property type="component" value="Chromosome"/>
</dbReference>
<dbReference type="GO" id="GO:0005829">
    <property type="term" value="C:cytosol"/>
    <property type="evidence" value="ECO:0007669"/>
    <property type="project" value="TreeGrafter"/>
</dbReference>
<dbReference type="GO" id="GO:0004056">
    <property type="term" value="F:argininosuccinate lyase activity"/>
    <property type="evidence" value="ECO:0007669"/>
    <property type="project" value="UniProtKB-UniRule"/>
</dbReference>
<dbReference type="GO" id="GO:0042450">
    <property type="term" value="P:arginine biosynthetic process via ornithine"/>
    <property type="evidence" value="ECO:0007669"/>
    <property type="project" value="InterPro"/>
</dbReference>
<dbReference type="GO" id="GO:0006526">
    <property type="term" value="P:L-arginine biosynthetic process"/>
    <property type="evidence" value="ECO:0007669"/>
    <property type="project" value="UniProtKB-UniRule"/>
</dbReference>
<dbReference type="CDD" id="cd01359">
    <property type="entry name" value="Argininosuccinate_lyase"/>
    <property type="match status" value="1"/>
</dbReference>
<dbReference type="FunFam" id="1.10.275.10:FF:000002">
    <property type="entry name" value="Argininosuccinate lyase"/>
    <property type="match status" value="1"/>
</dbReference>
<dbReference type="FunFam" id="1.10.40.30:FF:000001">
    <property type="entry name" value="Argininosuccinate lyase"/>
    <property type="match status" value="1"/>
</dbReference>
<dbReference type="FunFam" id="1.20.200.10:FF:000015">
    <property type="entry name" value="argininosuccinate lyase isoform X2"/>
    <property type="match status" value="1"/>
</dbReference>
<dbReference type="Gene3D" id="1.10.40.30">
    <property type="entry name" value="Fumarase/aspartase (C-terminal domain)"/>
    <property type="match status" value="1"/>
</dbReference>
<dbReference type="Gene3D" id="1.20.200.10">
    <property type="entry name" value="Fumarase/aspartase (Central domain)"/>
    <property type="match status" value="1"/>
</dbReference>
<dbReference type="Gene3D" id="1.10.275.10">
    <property type="entry name" value="Fumarase/aspartase (N-terminal domain)"/>
    <property type="match status" value="1"/>
</dbReference>
<dbReference type="HAMAP" id="MF_00006">
    <property type="entry name" value="Arg_succ_lyase"/>
    <property type="match status" value="1"/>
</dbReference>
<dbReference type="InterPro" id="IPR029419">
    <property type="entry name" value="Arg_succ_lyase_C"/>
</dbReference>
<dbReference type="InterPro" id="IPR009049">
    <property type="entry name" value="Argininosuccinate_lyase"/>
</dbReference>
<dbReference type="InterPro" id="IPR024083">
    <property type="entry name" value="Fumarase/histidase_N"/>
</dbReference>
<dbReference type="InterPro" id="IPR020557">
    <property type="entry name" value="Fumarate_lyase_CS"/>
</dbReference>
<dbReference type="InterPro" id="IPR000362">
    <property type="entry name" value="Fumarate_lyase_fam"/>
</dbReference>
<dbReference type="InterPro" id="IPR022761">
    <property type="entry name" value="Fumarate_lyase_N"/>
</dbReference>
<dbReference type="InterPro" id="IPR008948">
    <property type="entry name" value="L-Aspartase-like"/>
</dbReference>
<dbReference type="NCBIfam" id="TIGR00838">
    <property type="entry name" value="argH"/>
    <property type="match status" value="1"/>
</dbReference>
<dbReference type="PANTHER" id="PTHR43814">
    <property type="entry name" value="ARGININOSUCCINATE LYASE"/>
    <property type="match status" value="1"/>
</dbReference>
<dbReference type="PANTHER" id="PTHR43814:SF1">
    <property type="entry name" value="ARGININOSUCCINATE LYASE"/>
    <property type="match status" value="1"/>
</dbReference>
<dbReference type="Pfam" id="PF14698">
    <property type="entry name" value="ASL_C2"/>
    <property type="match status" value="1"/>
</dbReference>
<dbReference type="Pfam" id="PF00206">
    <property type="entry name" value="Lyase_1"/>
    <property type="match status" value="1"/>
</dbReference>
<dbReference type="PRINTS" id="PR00145">
    <property type="entry name" value="ARGSUCLYASE"/>
</dbReference>
<dbReference type="PRINTS" id="PR00149">
    <property type="entry name" value="FUMRATELYASE"/>
</dbReference>
<dbReference type="SUPFAM" id="SSF48557">
    <property type="entry name" value="L-aspartase-like"/>
    <property type="match status" value="1"/>
</dbReference>
<dbReference type="PROSITE" id="PS00163">
    <property type="entry name" value="FUMARATE_LYASES"/>
    <property type="match status" value="1"/>
</dbReference>
<sequence>MSTDKTNQSWGGRFSEPVDAFVARFTASVTFDQRLYRHDIMGSIAHATMLAKVGVLTDAERDTIVDGLNTIQAEIEAGNFEWRVDLEDVHMNIEARLTDRIGITGKKLHTGRSRNDQVATDIRLWLRDEIDLILSEITRLQKGLLVQAERESDTIMPGFTHLQTAQPVTFGHHMLAWFEMLSRDYERLVDCRKRLNRMPLGSAALAGTTYPIDRELTCKLLGFDVVGGNSLDGVSDRDFAIEFCSAASIAMMHLSRFSEELVLWTSAQFQFIDLPDRFCTGSSIMPQKKNPDVPELVRGKSGRVFGALMGLLTLMKGQPLAYNKDNQEDKEPLFDAADTLRDSLRAFADMIPAIKPRHAIMREAALRGFSTATDLADYLVRRGLPFRDCHEIVGHAVKYGVETGKDLAEMSLEELRQFSNQIEQDVFAVLTLEGSVNARNHVGGTAPEQVRAAVARGQELLAGR</sequence>
<evidence type="ECO:0000255" key="1">
    <source>
        <dbReference type="HAMAP-Rule" id="MF_00006"/>
    </source>
</evidence>